<dbReference type="EMBL" id="AP004126">
    <property type="protein sequence ID" value="BAD25206.1"/>
    <property type="molecule type" value="Genomic_DNA"/>
</dbReference>
<dbReference type="EMBL" id="AP004843">
    <property type="protein sequence ID" value="BAD28054.1"/>
    <property type="molecule type" value="Genomic_DNA"/>
</dbReference>
<dbReference type="EMBL" id="AP008208">
    <property type="protein sequence ID" value="BAF07889.1"/>
    <property type="molecule type" value="Genomic_DNA"/>
</dbReference>
<dbReference type="EMBL" id="AP014958">
    <property type="protein sequence ID" value="BAS77110.1"/>
    <property type="molecule type" value="Genomic_DNA"/>
</dbReference>
<dbReference type="EMBL" id="CM000139">
    <property type="protein sequence ID" value="EAZ21829.1"/>
    <property type="molecule type" value="Genomic_DNA"/>
</dbReference>
<dbReference type="EMBL" id="AK072377">
    <property type="status" value="NOT_ANNOTATED_CDS"/>
    <property type="molecule type" value="mRNA"/>
</dbReference>
<dbReference type="RefSeq" id="XP_015624705.1">
    <property type="nucleotide sequence ID" value="XM_015769219.1"/>
</dbReference>
<dbReference type="SMR" id="Q6H7U3"/>
<dbReference type="STRING" id="39947.Q6H7U3"/>
<dbReference type="PaxDb" id="39947-Q6H7U3"/>
<dbReference type="EnsemblPlants" id="Os02t0161100-01">
    <property type="protein sequence ID" value="Os02t0161100-01"/>
    <property type="gene ID" value="Os02g0161100"/>
</dbReference>
<dbReference type="Gramene" id="Os02t0161100-01">
    <property type="protein sequence ID" value="Os02t0161100-01"/>
    <property type="gene ID" value="Os02g0161100"/>
</dbReference>
<dbReference type="KEGG" id="dosa:Os02g0161100"/>
<dbReference type="eggNOG" id="KOG1922">
    <property type="taxonomic scope" value="Eukaryota"/>
</dbReference>
<dbReference type="HOGENOM" id="CLU_007699_1_1_1"/>
<dbReference type="InParanoid" id="Q6H7U3"/>
<dbReference type="OMA" id="HHDYMKV"/>
<dbReference type="OrthoDB" id="1668162at2759"/>
<dbReference type="Proteomes" id="UP000000763">
    <property type="component" value="Chromosome 2"/>
</dbReference>
<dbReference type="Proteomes" id="UP000007752">
    <property type="component" value="Chromosome 2"/>
</dbReference>
<dbReference type="Proteomes" id="UP000059680">
    <property type="component" value="Chromosome 2"/>
</dbReference>
<dbReference type="GO" id="GO:0005856">
    <property type="term" value="C:cytoskeleton"/>
    <property type="evidence" value="ECO:0000318"/>
    <property type="project" value="GO_Central"/>
</dbReference>
<dbReference type="GO" id="GO:0016020">
    <property type="term" value="C:membrane"/>
    <property type="evidence" value="ECO:0007669"/>
    <property type="project" value="UniProtKB-SubCell"/>
</dbReference>
<dbReference type="GO" id="GO:0051015">
    <property type="term" value="F:actin filament binding"/>
    <property type="evidence" value="ECO:0000318"/>
    <property type="project" value="GO_Central"/>
</dbReference>
<dbReference type="GO" id="GO:0030036">
    <property type="term" value="P:actin cytoskeleton organization"/>
    <property type="evidence" value="ECO:0000318"/>
    <property type="project" value="GO_Central"/>
</dbReference>
<dbReference type="GO" id="GO:0045010">
    <property type="term" value="P:actin nucleation"/>
    <property type="evidence" value="ECO:0007669"/>
    <property type="project" value="InterPro"/>
</dbReference>
<dbReference type="Gene3D" id="1.20.58.2220">
    <property type="entry name" value="Formin, FH2 domain"/>
    <property type="match status" value="1"/>
</dbReference>
<dbReference type="InterPro" id="IPR015425">
    <property type="entry name" value="FH2_Formin"/>
</dbReference>
<dbReference type="InterPro" id="IPR042201">
    <property type="entry name" value="FH2_Formin_sf"/>
</dbReference>
<dbReference type="InterPro" id="IPR027643">
    <property type="entry name" value="Formin-like_plant"/>
</dbReference>
<dbReference type="PANTHER" id="PTHR23213:SF235">
    <property type="entry name" value="FORMIN-LIKE PROTEIN 10"/>
    <property type="match status" value="1"/>
</dbReference>
<dbReference type="PANTHER" id="PTHR23213">
    <property type="entry name" value="FORMIN-RELATED"/>
    <property type="match status" value="1"/>
</dbReference>
<dbReference type="Pfam" id="PF02181">
    <property type="entry name" value="FH2"/>
    <property type="match status" value="1"/>
</dbReference>
<dbReference type="SMART" id="SM00498">
    <property type="entry name" value="FH2"/>
    <property type="match status" value="1"/>
</dbReference>
<dbReference type="SUPFAM" id="SSF101447">
    <property type="entry name" value="Formin homology 2 domain (FH2 domain)"/>
    <property type="match status" value="1"/>
</dbReference>
<dbReference type="PROSITE" id="PS51444">
    <property type="entry name" value="FH2"/>
    <property type="match status" value="1"/>
</dbReference>
<comment type="subcellular location">
    <subcellularLocation>
        <location evidence="4">Membrane</location>
        <topology evidence="4">Single-pass membrane protein</topology>
    </subcellularLocation>
</comment>
<comment type="similarity">
    <text evidence="4">Belongs to the formin-like family. Class-I subfamily.</text>
</comment>
<comment type="sequence caution" evidence="4">
    <conflict type="frameshift">
        <sequence resource="EMBL" id="AK072377"/>
    </conflict>
</comment>
<keyword id="KW-0472">Membrane</keyword>
<keyword id="KW-1185">Reference proteome</keyword>
<keyword id="KW-0732">Signal</keyword>
<keyword id="KW-0812">Transmembrane</keyword>
<keyword id="KW-1133">Transmembrane helix</keyword>
<evidence type="ECO:0000255" key="1"/>
<evidence type="ECO:0000255" key="2">
    <source>
        <dbReference type="PROSITE-ProRule" id="PRU00774"/>
    </source>
</evidence>
<evidence type="ECO:0000256" key="3">
    <source>
        <dbReference type="SAM" id="MobiDB-lite"/>
    </source>
</evidence>
<evidence type="ECO:0000305" key="4"/>
<accession>Q6H7U3</accession>
<accession>A0A0P0VEZ4</accession>
<name>FH10_ORYSJ</name>
<reference key="1">
    <citation type="journal article" date="2005" name="Nature">
        <title>The map-based sequence of the rice genome.</title>
        <authorList>
            <consortium name="International rice genome sequencing project (IRGSP)"/>
        </authorList>
    </citation>
    <scope>NUCLEOTIDE SEQUENCE [LARGE SCALE GENOMIC DNA]</scope>
    <source>
        <strain>cv. Nipponbare</strain>
    </source>
</reference>
<reference key="2">
    <citation type="journal article" date="2008" name="Nucleic Acids Res.">
        <title>The rice annotation project database (RAP-DB): 2008 update.</title>
        <authorList>
            <consortium name="The rice annotation project (RAP)"/>
        </authorList>
    </citation>
    <scope>GENOME REANNOTATION</scope>
    <source>
        <strain>cv. Nipponbare</strain>
    </source>
</reference>
<reference key="3">
    <citation type="journal article" date="2013" name="Rice">
        <title>Improvement of the Oryza sativa Nipponbare reference genome using next generation sequence and optical map data.</title>
        <authorList>
            <person name="Kawahara Y."/>
            <person name="de la Bastide M."/>
            <person name="Hamilton J.P."/>
            <person name="Kanamori H."/>
            <person name="McCombie W.R."/>
            <person name="Ouyang S."/>
            <person name="Schwartz D.C."/>
            <person name="Tanaka T."/>
            <person name="Wu J."/>
            <person name="Zhou S."/>
            <person name="Childs K.L."/>
            <person name="Davidson R.M."/>
            <person name="Lin H."/>
            <person name="Quesada-Ocampo L."/>
            <person name="Vaillancourt B."/>
            <person name="Sakai H."/>
            <person name="Lee S.S."/>
            <person name="Kim J."/>
            <person name="Numa H."/>
            <person name="Itoh T."/>
            <person name="Buell C.R."/>
            <person name="Matsumoto T."/>
        </authorList>
    </citation>
    <scope>GENOME REANNOTATION</scope>
    <source>
        <strain>cv. Nipponbare</strain>
    </source>
</reference>
<reference key="4">
    <citation type="journal article" date="2005" name="PLoS Biol.">
        <title>The genomes of Oryza sativa: a history of duplications.</title>
        <authorList>
            <person name="Yu J."/>
            <person name="Wang J."/>
            <person name="Lin W."/>
            <person name="Li S."/>
            <person name="Li H."/>
            <person name="Zhou J."/>
            <person name="Ni P."/>
            <person name="Dong W."/>
            <person name="Hu S."/>
            <person name="Zeng C."/>
            <person name="Zhang J."/>
            <person name="Zhang Y."/>
            <person name="Li R."/>
            <person name="Xu Z."/>
            <person name="Li S."/>
            <person name="Li X."/>
            <person name="Zheng H."/>
            <person name="Cong L."/>
            <person name="Lin L."/>
            <person name="Yin J."/>
            <person name="Geng J."/>
            <person name="Li G."/>
            <person name="Shi J."/>
            <person name="Liu J."/>
            <person name="Lv H."/>
            <person name="Li J."/>
            <person name="Wang J."/>
            <person name="Deng Y."/>
            <person name="Ran L."/>
            <person name="Shi X."/>
            <person name="Wang X."/>
            <person name="Wu Q."/>
            <person name="Li C."/>
            <person name="Ren X."/>
            <person name="Wang J."/>
            <person name="Wang X."/>
            <person name="Li D."/>
            <person name="Liu D."/>
            <person name="Zhang X."/>
            <person name="Ji Z."/>
            <person name="Zhao W."/>
            <person name="Sun Y."/>
            <person name="Zhang Z."/>
            <person name="Bao J."/>
            <person name="Han Y."/>
            <person name="Dong L."/>
            <person name="Ji J."/>
            <person name="Chen P."/>
            <person name="Wu S."/>
            <person name="Liu J."/>
            <person name="Xiao Y."/>
            <person name="Bu D."/>
            <person name="Tan J."/>
            <person name="Yang L."/>
            <person name="Ye C."/>
            <person name="Zhang J."/>
            <person name="Xu J."/>
            <person name="Zhou Y."/>
            <person name="Yu Y."/>
            <person name="Zhang B."/>
            <person name="Zhuang S."/>
            <person name="Wei H."/>
            <person name="Liu B."/>
            <person name="Lei M."/>
            <person name="Yu H."/>
            <person name="Li Y."/>
            <person name="Xu H."/>
            <person name="Wei S."/>
            <person name="He X."/>
            <person name="Fang L."/>
            <person name="Zhang Z."/>
            <person name="Zhang Y."/>
            <person name="Huang X."/>
            <person name="Su Z."/>
            <person name="Tong W."/>
            <person name="Li J."/>
            <person name="Tong Z."/>
            <person name="Li S."/>
            <person name="Ye J."/>
            <person name="Wang L."/>
            <person name="Fang L."/>
            <person name="Lei T."/>
            <person name="Chen C.-S."/>
            <person name="Chen H.-C."/>
            <person name="Xu Z."/>
            <person name="Li H."/>
            <person name="Huang H."/>
            <person name="Zhang F."/>
            <person name="Xu H."/>
            <person name="Li N."/>
            <person name="Zhao C."/>
            <person name="Li S."/>
            <person name="Dong L."/>
            <person name="Huang Y."/>
            <person name="Li L."/>
            <person name="Xi Y."/>
            <person name="Qi Q."/>
            <person name="Li W."/>
            <person name="Zhang B."/>
            <person name="Hu W."/>
            <person name="Zhang Y."/>
            <person name="Tian X."/>
            <person name="Jiao Y."/>
            <person name="Liang X."/>
            <person name="Jin J."/>
            <person name="Gao L."/>
            <person name="Zheng W."/>
            <person name="Hao B."/>
            <person name="Liu S.-M."/>
            <person name="Wang W."/>
            <person name="Yuan L."/>
            <person name="Cao M."/>
            <person name="McDermott J."/>
            <person name="Samudrala R."/>
            <person name="Wang J."/>
            <person name="Wong G.K.-S."/>
            <person name="Yang H."/>
        </authorList>
    </citation>
    <scope>NUCLEOTIDE SEQUENCE [LARGE SCALE GENOMIC DNA]</scope>
    <source>
        <strain>cv. Nipponbare</strain>
    </source>
</reference>
<reference key="5">
    <citation type="journal article" date="2003" name="Science">
        <title>Collection, mapping, and annotation of over 28,000 cDNA clones from japonica rice.</title>
        <authorList>
            <consortium name="The rice full-length cDNA consortium"/>
        </authorList>
    </citation>
    <scope>NUCLEOTIDE SEQUENCE [LARGE SCALE MRNA]</scope>
    <source>
        <strain>cv. Nipponbare</strain>
    </source>
</reference>
<reference key="6">
    <citation type="journal article" date="2004" name="BMC Genomics">
        <title>Formin homology 2 domains occur in multiple contexts in angiosperms.</title>
        <authorList>
            <person name="Cvrckova F."/>
            <person name="Novotny M."/>
            <person name="Pickova D."/>
            <person name="Zarsky V."/>
        </authorList>
    </citation>
    <scope>GENE FAMILY</scope>
    <scope>NOMENCLATURE</scope>
</reference>
<gene>
    <name type="primary">FH10</name>
    <name type="ordered locus">Os02g0161100</name>
    <name type="ordered locus">LOC_Os02g06580</name>
    <name type="ORF">B1103G11.53</name>
    <name type="ORF">OJ9003_G05.18</name>
    <name type="ORF">OsJ_005312</name>
</gene>
<organism>
    <name type="scientific">Oryza sativa subsp. japonica</name>
    <name type="common">Rice</name>
    <dbReference type="NCBI Taxonomy" id="39947"/>
    <lineage>
        <taxon>Eukaryota</taxon>
        <taxon>Viridiplantae</taxon>
        <taxon>Streptophyta</taxon>
        <taxon>Embryophyta</taxon>
        <taxon>Tracheophyta</taxon>
        <taxon>Spermatophyta</taxon>
        <taxon>Magnoliopsida</taxon>
        <taxon>Liliopsida</taxon>
        <taxon>Poales</taxon>
        <taxon>Poaceae</taxon>
        <taxon>BOP clade</taxon>
        <taxon>Oryzoideae</taxon>
        <taxon>Oryzeae</taxon>
        <taxon>Oryzinae</taxon>
        <taxon>Oryza</taxon>
        <taxon>Oryza sativa</taxon>
    </lineage>
</organism>
<protein>
    <recommendedName>
        <fullName>Formin-like protein 10</fullName>
    </recommendedName>
    <alternativeName>
        <fullName>OsFH10</fullName>
    </alternativeName>
</protein>
<sequence length="881" mass="96463">MAMKRVVFLLLLVAASALVKSSRGGGGGEEKLGKFYGWRRHLSSGPAASSLVLSGDLVDKIWSVCLQDIVSPEDTFGFGESFAWDELSSHSTEDELKATLFMELMALLPPEKSSFTYDCIRANCFSLGVPQIFSVALSNYLESQKSLVGSNFYPRRRLVDKLIGDAPSMAPAFAPSMSSGGEVHSPLSVAEAPLTPSNSLNMEPPSPYYPSKSAHKHQGVAPPVSPSEEYHDYMKVVLIAVLPTAALSFLAAFLCFYCCGCNKSKVSVGEQRDDHPLLHLQFSNLPGSSPDVHVPASPLHKDDHGVRPSNAGVSMSKCFPCCFKTSSDATTPTLVTGGTQENNATSDAPKLMPPPPPPPPPPPPPPPPPPPRPPPPPPPIKKGAPPPAPPKATMARFPKLSPTESSRSEESSASELASESSETEVNAPRAKLRPFYWDKVLANPDQSMAWHDIKFGSFHVNEEMIEELFGYGAGNQNNVKDKEISIADPSPQHVSLLDVKKSCNLAVVFKAMNVRAEEIHDALVEGNELPRLLLETILRMKPTDEEEQKLRLYNGDCSQLGLAEQVMKALIDIPFAFERIRALLFMSSLQEDASSLRESFLQLEAACGELKHRLFLKLLEAILKTGNRLNDGTFRGGANAFKLDTLLKLSDVKGADGKTTLLHFVVQEIIRSEGVREARLAMENGRSPPFPSTSDDNSNESLQEDGNYYSNLGLKIVSGLSNELDNVKRVAALDADALSTSVANLRHELLRAKEFLNSDMASLEENSGFHRSLESFIEHAETETNFLLKEDKRLRMLVKRTIRYFHGNDEKDDGFRLFVIVRDFLVMLDKACKEVGASQKKATNKSQANGNSNNPSSQSNPQEQQFPAVLDHHFDSSDSND</sequence>
<proteinExistence type="evidence at transcript level"/>
<feature type="signal peptide" evidence="1">
    <location>
        <begin position="1"/>
        <end position="24"/>
    </location>
</feature>
<feature type="chain" id="PRO_0000319001" description="Formin-like protein 10">
    <location>
        <begin position="25"/>
        <end position="881"/>
    </location>
</feature>
<feature type="transmembrane region" description="Helical" evidence="1">
    <location>
        <begin position="236"/>
        <end position="256"/>
    </location>
</feature>
<feature type="domain" description="FH2" evidence="2">
    <location>
        <begin position="422"/>
        <end position="854"/>
    </location>
</feature>
<feature type="region of interest" description="Disordered" evidence="3">
    <location>
        <begin position="194"/>
        <end position="223"/>
    </location>
</feature>
<feature type="region of interest" description="Disordered" evidence="3">
    <location>
        <begin position="333"/>
        <end position="427"/>
    </location>
</feature>
<feature type="region of interest" description="Disordered" evidence="3">
    <location>
        <begin position="683"/>
        <end position="703"/>
    </location>
</feature>
<feature type="region of interest" description="Disordered" evidence="3">
    <location>
        <begin position="837"/>
        <end position="881"/>
    </location>
</feature>
<feature type="compositionally biased region" description="Polar residues" evidence="3">
    <location>
        <begin position="333"/>
        <end position="346"/>
    </location>
</feature>
<feature type="compositionally biased region" description="Pro residues" evidence="3">
    <location>
        <begin position="351"/>
        <end position="390"/>
    </location>
</feature>
<feature type="compositionally biased region" description="Low complexity" evidence="3">
    <location>
        <begin position="400"/>
        <end position="424"/>
    </location>
</feature>
<feature type="compositionally biased region" description="Polar residues" evidence="3">
    <location>
        <begin position="692"/>
        <end position="701"/>
    </location>
</feature>
<feature type="compositionally biased region" description="Low complexity" evidence="3">
    <location>
        <begin position="846"/>
        <end position="865"/>
    </location>
</feature>
<feature type="compositionally biased region" description="Basic and acidic residues" evidence="3">
    <location>
        <begin position="870"/>
        <end position="881"/>
    </location>
</feature>